<evidence type="ECO:0000256" key="1">
    <source>
        <dbReference type="SAM" id="MobiDB-lite"/>
    </source>
</evidence>
<evidence type="ECO:0000269" key="2">
    <source>
    </source>
</evidence>
<evidence type="ECO:0000269" key="3">
    <source>
    </source>
</evidence>
<evidence type="ECO:0000269" key="4">
    <source>
    </source>
</evidence>
<evidence type="ECO:0000269" key="5">
    <source>
    </source>
</evidence>
<evidence type="ECO:0000305" key="6"/>
<evidence type="ECO:0007744" key="7">
    <source>
    </source>
</evidence>
<evidence type="ECO:0007744" key="8">
    <source>
    </source>
</evidence>
<evidence type="ECO:0007744" key="9">
    <source>
    </source>
</evidence>
<evidence type="ECO:0007744" key="10">
    <source>
    </source>
</evidence>
<proteinExistence type="evidence at protein level"/>
<protein>
    <recommendedName>
        <fullName>Suppressor of mar1-1 protein</fullName>
        <shortName>SUM1-1 protein</shortName>
    </recommendedName>
</protein>
<name>SUM1_YEAST</name>
<accession>P46676</accession>
<accession>D6VST9</accession>
<feature type="initiator methionine" description="Removed" evidence="10">
    <location>
        <position position="1"/>
    </location>
</feature>
<feature type="chain" id="PRO_0000072311" description="Suppressor of mar1-1 protein">
    <location>
        <begin position="2"/>
        <end position="1062"/>
    </location>
</feature>
<feature type="region of interest" description="Disordered" evidence="1">
    <location>
        <begin position="1"/>
        <end position="27"/>
    </location>
</feature>
<feature type="region of interest" description="Disordered" evidence="1">
    <location>
        <begin position="188"/>
        <end position="217"/>
    </location>
</feature>
<feature type="region of interest" description="Disordered" evidence="1">
    <location>
        <begin position="267"/>
        <end position="337"/>
    </location>
</feature>
<feature type="region of interest" description="Disordered" evidence="1">
    <location>
        <begin position="370"/>
        <end position="398"/>
    </location>
</feature>
<feature type="region of interest" description="Disordered" evidence="1">
    <location>
        <begin position="595"/>
        <end position="634"/>
    </location>
</feature>
<feature type="region of interest" description="Disordered" evidence="1">
    <location>
        <begin position="681"/>
        <end position="804"/>
    </location>
</feature>
<feature type="compositionally biased region" description="Polar residues" evidence="1">
    <location>
        <begin position="1"/>
        <end position="17"/>
    </location>
</feature>
<feature type="compositionally biased region" description="Low complexity" evidence="1">
    <location>
        <begin position="189"/>
        <end position="205"/>
    </location>
</feature>
<feature type="compositionally biased region" description="Polar residues" evidence="1">
    <location>
        <begin position="267"/>
        <end position="279"/>
    </location>
</feature>
<feature type="compositionally biased region" description="Polar residues" evidence="1">
    <location>
        <begin position="287"/>
        <end position="298"/>
    </location>
</feature>
<feature type="compositionally biased region" description="Polar residues" evidence="1">
    <location>
        <begin position="305"/>
        <end position="323"/>
    </location>
</feature>
<feature type="compositionally biased region" description="Basic residues" evidence="1">
    <location>
        <begin position="325"/>
        <end position="335"/>
    </location>
</feature>
<feature type="compositionally biased region" description="Polar residues" evidence="1">
    <location>
        <begin position="370"/>
        <end position="385"/>
    </location>
</feature>
<feature type="compositionally biased region" description="Polar residues" evidence="1">
    <location>
        <begin position="610"/>
        <end position="629"/>
    </location>
</feature>
<feature type="compositionally biased region" description="Basic and acidic residues" evidence="1">
    <location>
        <begin position="685"/>
        <end position="699"/>
    </location>
</feature>
<feature type="compositionally biased region" description="Polar residues" evidence="1">
    <location>
        <begin position="704"/>
        <end position="716"/>
    </location>
</feature>
<feature type="compositionally biased region" description="Polar residues" evidence="1">
    <location>
        <begin position="781"/>
        <end position="793"/>
    </location>
</feature>
<feature type="modified residue" description="N-acetylserine" evidence="10">
    <location>
        <position position="2"/>
    </location>
</feature>
<feature type="modified residue" description="Phosphoserine" evidence="9">
    <location>
        <position position="378"/>
    </location>
</feature>
<feature type="modified residue" description="Phosphoserine" evidence="9">
    <location>
        <position position="379"/>
    </location>
</feature>
<feature type="modified residue" description="Phosphoserine" evidence="8 9">
    <location>
        <position position="628"/>
    </location>
</feature>
<feature type="modified residue" description="Phosphoserine" evidence="8">
    <location>
        <position position="681"/>
    </location>
</feature>
<feature type="modified residue" description="Phosphothreonine" evidence="7 8 9">
    <location>
        <position position="697"/>
    </location>
</feature>
<feature type="modified residue" description="Phosphoserine; by ATM or ATR" evidence="9">
    <location>
        <position position="712"/>
    </location>
</feature>
<feature type="modified residue" description="Phosphoserine" evidence="8 9">
    <location>
        <position position="738"/>
    </location>
</feature>
<feature type="modified residue" description="Phosphothreonine" evidence="8 9">
    <location>
        <position position="817"/>
    </location>
</feature>
<feature type="mutagenesis site" description="Loss of function." evidence="5">
    <original>T</original>
    <variation>I</variation>
    <location>
        <position position="988"/>
    </location>
</feature>
<feature type="sequence conflict" description="In Ref. 1." evidence="6" ref="1">
    <original>MSENTTAPSDNITNEQRLPS</original>
    <variation>MNRDFRL</variation>
    <location>
        <begin position="1"/>
        <end position="20"/>
    </location>
</feature>
<feature type="sequence conflict" description="In Ref. 1; AAB38222." evidence="6" ref="1">
    <original>A</original>
    <variation>R</variation>
    <location>
        <position position="30"/>
    </location>
</feature>
<feature type="sequence conflict" description="In Ref. 1; AAB38222." evidence="6" ref="1">
    <original>A</original>
    <variation>G</variation>
    <location>
        <position position="408"/>
    </location>
</feature>
<feature type="sequence conflict" description="In Ref. 1; AAB38222." evidence="6" ref="1">
    <location>
        <position position="523"/>
    </location>
</feature>
<feature type="sequence conflict" description="In Ref. 1; AAB38222." evidence="6" ref="1">
    <original>G</original>
    <variation>A</variation>
    <location>
        <position position="826"/>
    </location>
</feature>
<sequence>MSENTTAPSDNITNEQRLPSGPKDDVDTLALTSAQNQANSLRKLDTDANAKALPSITDIPVSDDSDIKRQVGSGFGSNPLHIKDSEAFPHSSIEALKEGMDKVTKQCNDLKTALLSKDTSLTDSVQDLFNSLKVLSHNQSVLENKLDDVMKNQVNTDILVNNLNERLNKLSTMLQNTSKVNHSNLLIENSSNNTSSQHNTSSSRRGPGRPRKDASTSTMNKLVSNAASVNLKSASNQGAPFSPVNITLPTAVVQTSKSKRYFVEPSTKQESLLLSAPSSSRDDADMSLTSVPQRTNNENGKERPSTANSSSITPTPVTPNNLIQIKRKRGRPPKKRTVETMISNSTDTIDKSDASNRIKNEIPINSLLPSSKFHQIPSSPSNPVSQPAPVRTSRSATQEIDIKSLELASLISTNGDPNAEDSNTTDTVHNNVEGKVNVEENKTEKEKIITIKSSSENSGNNTTNNNNTDNVIKFSANSDINSDIRRLMVNDQFSLSYDASGNITVKLPPVSSPAAATAAAAAAVTSEMNRQQRELDKRRDSREKMLVNMKYNDRDKAKSFMESNKKLLKAMKEEERRKRMTSIIHDNHLNLNLNEISTRSKIKSAEKPTTKGSSMSPKPRSASISGISDHQQEGYQPLEQEKLVDIDNEGSNANSDSLKMGLTISAADTVHKVGIQSMLNSGEEAITKENAEYERKTPGDEETTTFVPLENSQPSDTIRKRTAGDDGALDQTENTSISPKKRRTEDHTKGEEDEGERGVGNSGTLATVENVSGDISADLSKGTSSIHNDTESANDSSNGNGNLGLGTESRNTLLTATPIELICREGFFYRRDIPDVPITTGAYLEFKFKAKEEELINSSINEEDYAAKSKHEKMNAHFFKPDIQEETELAFEILSKTTLTEKYVNSLEYFLMEFRWENKLVGLGLKLRESKRTWQRRKALFALFEFWRDQSRDKRRFHNYTILHAVKEMENYRIFINRSVSWFYNHITLLKMILYDLCDNVTTQWREWMFPHNETLPALGQDGINEDNLNETIDNMLIFDFLDDGSENNQVKYSRIIPPDIR</sequence>
<gene>
    <name type="primary">SUM1</name>
    <name type="ordered locus">YDR310C</name>
    <name type="ORF">D9740.19</name>
</gene>
<keyword id="KW-0007">Acetylation</keyword>
<keyword id="KW-0238">DNA-binding</keyword>
<keyword id="KW-0539">Nucleus</keyword>
<keyword id="KW-0597">Phosphoprotein</keyword>
<keyword id="KW-1185">Reference proteome</keyword>
<keyword id="KW-0678">Repressor</keyword>
<keyword id="KW-0749">Sporulation</keyword>
<keyword id="KW-0804">Transcription</keyword>
<keyword id="KW-0805">Transcription regulation</keyword>
<dbReference type="EMBL" id="U34832">
    <property type="protein sequence ID" value="AAB38222.1"/>
    <property type="molecule type" value="Genomic_DNA"/>
</dbReference>
<dbReference type="EMBL" id="U28374">
    <property type="protein sequence ID" value="AAB64746.1"/>
    <property type="molecule type" value="Genomic_DNA"/>
</dbReference>
<dbReference type="EMBL" id="BK006938">
    <property type="protein sequence ID" value="DAA12149.1"/>
    <property type="molecule type" value="Genomic_DNA"/>
</dbReference>
<dbReference type="PIR" id="S61196">
    <property type="entry name" value="S61196"/>
</dbReference>
<dbReference type="RefSeq" id="NP_010596.1">
    <property type="nucleotide sequence ID" value="NM_001180618.1"/>
</dbReference>
<dbReference type="SMR" id="P46676"/>
<dbReference type="BioGRID" id="32363">
    <property type="interactions" value="546"/>
</dbReference>
<dbReference type="ComplexPortal" id="CPX-1384">
    <property type="entry name" value="SUM1-RFM1-HST1 histone deacetylase complex"/>
</dbReference>
<dbReference type="DIP" id="DIP-6438N"/>
<dbReference type="FunCoup" id="P46676">
    <property type="interactions" value="1132"/>
</dbReference>
<dbReference type="IntAct" id="P46676">
    <property type="interactions" value="34"/>
</dbReference>
<dbReference type="MINT" id="P46676"/>
<dbReference type="STRING" id="4932.YDR310C"/>
<dbReference type="GlyGen" id="P46676">
    <property type="glycosylation" value="4 sites, 1 O-linked glycan (3 sites)"/>
</dbReference>
<dbReference type="iPTMnet" id="P46676"/>
<dbReference type="PaxDb" id="4932-YDR310C"/>
<dbReference type="PeptideAtlas" id="P46676"/>
<dbReference type="EnsemblFungi" id="YDR310C_mRNA">
    <property type="protein sequence ID" value="YDR310C"/>
    <property type="gene ID" value="YDR310C"/>
</dbReference>
<dbReference type="GeneID" id="851905"/>
<dbReference type="KEGG" id="sce:YDR310C"/>
<dbReference type="AGR" id="SGD:S000002718"/>
<dbReference type="SGD" id="S000002718">
    <property type="gene designation" value="SUM1"/>
</dbReference>
<dbReference type="VEuPathDB" id="FungiDB:YDR310C"/>
<dbReference type="eggNOG" id="ENOG502QTPX">
    <property type="taxonomic scope" value="Eukaryota"/>
</dbReference>
<dbReference type="HOGENOM" id="CLU_012589_0_0_1"/>
<dbReference type="InParanoid" id="P46676"/>
<dbReference type="OMA" id="FALFEFW"/>
<dbReference type="OrthoDB" id="4067996at2759"/>
<dbReference type="BioCyc" id="YEAST:G3O-29869-MONOMER"/>
<dbReference type="BioGRID-ORCS" id="851905">
    <property type="hits" value="0 hits in 13 CRISPR screens"/>
</dbReference>
<dbReference type="PRO" id="PR:P46676"/>
<dbReference type="Proteomes" id="UP000002311">
    <property type="component" value="Chromosome IV"/>
</dbReference>
<dbReference type="RNAct" id="P46676">
    <property type="molecule type" value="protein"/>
</dbReference>
<dbReference type="GO" id="GO:0000118">
    <property type="term" value="C:histone deacetylase complex"/>
    <property type="evidence" value="ECO:0000353"/>
    <property type="project" value="ComplexPortal"/>
</dbReference>
<dbReference type="GO" id="GO:0005634">
    <property type="term" value="C:nucleus"/>
    <property type="evidence" value="ECO:0000314"/>
    <property type="project" value="CACAO"/>
</dbReference>
<dbReference type="GO" id="GO:0003688">
    <property type="term" value="F:DNA replication origin binding"/>
    <property type="evidence" value="ECO:0000314"/>
    <property type="project" value="SGD"/>
</dbReference>
<dbReference type="GO" id="GO:0001227">
    <property type="term" value="F:DNA-binding transcription repressor activity, RNA polymerase II-specific"/>
    <property type="evidence" value="ECO:0000314"/>
    <property type="project" value="SGD"/>
</dbReference>
<dbReference type="GO" id="GO:0000978">
    <property type="term" value="F:RNA polymerase II cis-regulatory region sequence-specific DNA binding"/>
    <property type="evidence" value="ECO:0000314"/>
    <property type="project" value="SGD"/>
</dbReference>
<dbReference type="GO" id="GO:0043565">
    <property type="term" value="F:sequence-specific DNA binding"/>
    <property type="evidence" value="ECO:0007005"/>
    <property type="project" value="SGD"/>
</dbReference>
<dbReference type="GO" id="GO:0000278">
    <property type="term" value="P:mitotic cell cycle"/>
    <property type="evidence" value="ECO:0000315"/>
    <property type="project" value="SGD"/>
</dbReference>
<dbReference type="GO" id="GO:0110029">
    <property type="term" value="P:negative regulation of meiosis I"/>
    <property type="evidence" value="ECO:0000315"/>
    <property type="project" value="CACAO"/>
</dbReference>
<dbReference type="GO" id="GO:0010944">
    <property type="term" value="P:negative regulation of transcription by competitive promoter binding"/>
    <property type="evidence" value="ECO:0000314"/>
    <property type="project" value="SGD"/>
</dbReference>
<dbReference type="GO" id="GO:0000122">
    <property type="term" value="P:negative regulation of transcription by RNA polymerase II"/>
    <property type="evidence" value="ECO:0000315"/>
    <property type="project" value="SGD"/>
</dbReference>
<dbReference type="GO" id="GO:0032298">
    <property type="term" value="P:positive regulation of DNA-templated DNA replication initiation"/>
    <property type="evidence" value="ECO:0000315"/>
    <property type="project" value="SGD"/>
</dbReference>
<dbReference type="GO" id="GO:0030174">
    <property type="term" value="P:regulation of DNA-templated DNA replication initiation"/>
    <property type="evidence" value="ECO:0000303"/>
    <property type="project" value="ComplexPortal"/>
</dbReference>
<dbReference type="GO" id="GO:0043937">
    <property type="term" value="P:regulation of sporulation"/>
    <property type="evidence" value="ECO:0000303"/>
    <property type="project" value="ComplexPortal"/>
</dbReference>
<dbReference type="GO" id="GO:0006357">
    <property type="term" value="P:regulation of transcription by RNA polymerase II"/>
    <property type="evidence" value="ECO:0000303"/>
    <property type="project" value="ComplexPortal"/>
</dbReference>
<dbReference type="GO" id="GO:0030466">
    <property type="term" value="P:silent mating-type cassette heterochromatin formation"/>
    <property type="evidence" value="ECO:0000315"/>
    <property type="project" value="SGD"/>
</dbReference>
<dbReference type="GO" id="GO:0030435">
    <property type="term" value="P:sporulation resulting in formation of a cellular spore"/>
    <property type="evidence" value="ECO:0007669"/>
    <property type="project" value="UniProtKB-KW"/>
</dbReference>
<reference key="1">
    <citation type="journal article" date="1996" name="Mol. Cell. Biol.">
        <title>SUM1-1, a dominant suppressor of SIR mutations in Saccharomyces cerevisiae, increases transcriptional silencing at telomeres and HM mating-type loci and decreases chromosome stability.</title>
        <authorList>
            <person name="Chi M.-H."/>
            <person name="Shore D."/>
        </authorList>
    </citation>
    <scope>NUCLEOTIDE SEQUENCE [GENOMIC DNA]</scope>
    <scope>SUBCELLULAR LOCATION</scope>
    <scope>MUTAGENESIS OF THR-988</scope>
    <source>
        <strain>ATCC 200060 / W303</strain>
    </source>
</reference>
<reference key="2">
    <citation type="journal article" date="1997" name="Nature">
        <title>The nucleotide sequence of Saccharomyces cerevisiae chromosome IV.</title>
        <authorList>
            <person name="Jacq C."/>
            <person name="Alt-Moerbe J."/>
            <person name="Andre B."/>
            <person name="Arnold W."/>
            <person name="Bahr A."/>
            <person name="Ballesta J.P.G."/>
            <person name="Bargues M."/>
            <person name="Baron L."/>
            <person name="Becker A."/>
            <person name="Biteau N."/>
            <person name="Bloecker H."/>
            <person name="Blugeon C."/>
            <person name="Boskovic J."/>
            <person name="Brandt P."/>
            <person name="Brueckner M."/>
            <person name="Buitrago M.J."/>
            <person name="Coster F."/>
            <person name="Delaveau T."/>
            <person name="del Rey F."/>
            <person name="Dujon B."/>
            <person name="Eide L.G."/>
            <person name="Garcia-Cantalejo J.M."/>
            <person name="Goffeau A."/>
            <person name="Gomez-Peris A."/>
            <person name="Granotier C."/>
            <person name="Hanemann V."/>
            <person name="Hankeln T."/>
            <person name="Hoheisel J.D."/>
            <person name="Jaeger W."/>
            <person name="Jimenez A."/>
            <person name="Jonniaux J.-L."/>
            <person name="Kraemer C."/>
            <person name="Kuester H."/>
            <person name="Laamanen P."/>
            <person name="Legros Y."/>
            <person name="Louis E.J."/>
            <person name="Moeller-Rieker S."/>
            <person name="Monnet A."/>
            <person name="Moro M."/>
            <person name="Mueller-Auer S."/>
            <person name="Nussbaumer B."/>
            <person name="Paricio N."/>
            <person name="Paulin L."/>
            <person name="Perea J."/>
            <person name="Perez-Alonso M."/>
            <person name="Perez-Ortin J.E."/>
            <person name="Pohl T.M."/>
            <person name="Prydz H."/>
            <person name="Purnelle B."/>
            <person name="Rasmussen S.W."/>
            <person name="Remacha M.A."/>
            <person name="Revuelta J.L."/>
            <person name="Rieger M."/>
            <person name="Salom D."/>
            <person name="Saluz H.P."/>
            <person name="Saiz J.E."/>
            <person name="Saren A.-M."/>
            <person name="Schaefer M."/>
            <person name="Scharfe M."/>
            <person name="Schmidt E.R."/>
            <person name="Schneider C."/>
            <person name="Scholler P."/>
            <person name="Schwarz S."/>
            <person name="Soler-Mira A."/>
            <person name="Urrestarazu L.A."/>
            <person name="Verhasselt P."/>
            <person name="Vissers S."/>
            <person name="Voet M."/>
            <person name="Volckaert G."/>
            <person name="Wagner G."/>
            <person name="Wambutt R."/>
            <person name="Wedler E."/>
            <person name="Wedler H."/>
            <person name="Woelfl S."/>
            <person name="Harris D.E."/>
            <person name="Bowman S."/>
            <person name="Brown D."/>
            <person name="Churcher C.M."/>
            <person name="Connor R."/>
            <person name="Dedman K."/>
            <person name="Gentles S."/>
            <person name="Hamlin N."/>
            <person name="Hunt S."/>
            <person name="Jones L."/>
            <person name="McDonald S."/>
            <person name="Murphy L.D."/>
            <person name="Niblett D."/>
            <person name="Odell C."/>
            <person name="Oliver K."/>
            <person name="Rajandream M.A."/>
            <person name="Richards C."/>
            <person name="Shore L."/>
            <person name="Walsh S.V."/>
            <person name="Barrell B.G."/>
            <person name="Dietrich F.S."/>
            <person name="Mulligan J.T."/>
            <person name="Allen E."/>
            <person name="Araujo R."/>
            <person name="Aviles E."/>
            <person name="Berno A."/>
            <person name="Carpenter J."/>
            <person name="Chen E."/>
            <person name="Cherry J.M."/>
            <person name="Chung E."/>
            <person name="Duncan M."/>
            <person name="Hunicke-Smith S."/>
            <person name="Hyman R.W."/>
            <person name="Komp C."/>
            <person name="Lashkari D."/>
            <person name="Lew H."/>
            <person name="Lin D."/>
            <person name="Mosedale D."/>
            <person name="Nakahara K."/>
            <person name="Namath A."/>
            <person name="Oefner P."/>
            <person name="Oh C."/>
            <person name="Petel F.X."/>
            <person name="Roberts D."/>
            <person name="Schramm S."/>
            <person name="Schroeder M."/>
            <person name="Shogren T."/>
            <person name="Shroff N."/>
            <person name="Winant A."/>
            <person name="Yelton M.A."/>
            <person name="Botstein D."/>
            <person name="Davis R.W."/>
            <person name="Johnston M."/>
            <person name="Andrews S."/>
            <person name="Brinkman R."/>
            <person name="Cooper J."/>
            <person name="Ding H."/>
            <person name="Du Z."/>
            <person name="Favello A."/>
            <person name="Fulton L."/>
            <person name="Gattung S."/>
            <person name="Greco T."/>
            <person name="Hallsworth K."/>
            <person name="Hawkins J."/>
            <person name="Hillier L.W."/>
            <person name="Jier M."/>
            <person name="Johnson D."/>
            <person name="Johnston L."/>
            <person name="Kirsten J."/>
            <person name="Kucaba T."/>
            <person name="Langston Y."/>
            <person name="Latreille P."/>
            <person name="Le T."/>
            <person name="Mardis E."/>
            <person name="Menezes S."/>
            <person name="Miller N."/>
            <person name="Nhan M."/>
            <person name="Pauley A."/>
            <person name="Peluso D."/>
            <person name="Rifkin L."/>
            <person name="Riles L."/>
            <person name="Taich A."/>
            <person name="Trevaskis E."/>
            <person name="Vignati D."/>
            <person name="Wilcox L."/>
            <person name="Wohldman P."/>
            <person name="Vaudin M."/>
            <person name="Wilson R."/>
            <person name="Waterston R."/>
            <person name="Albermann K."/>
            <person name="Hani J."/>
            <person name="Heumann K."/>
            <person name="Kleine K."/>
            <person name="Mewes H.-W."/>
            <person name="Zollner A."/>
            <person name="Zaccaria P."/>
        </authorList>
    </citation>
    <scope>NUCLEOTIDE SEQUENCE [LARGE SCALE GENOMIC DNA]</scope>
    <source>
        <strain>ATCC 204508 / S288c</strain>
    </source>
</reference>
<reference key="3">
    <citation type="journal article" date="2014" name="G3 (Bethesda)">
        <title>The reference genome sequence of Saccharomyces cerevisiae: Then and now.</title>
        <authorList>
            <person name="Engel S.R."/>
            <person name="Dietrich F.S."/>
            <person name="Fisk D.G."/>
            <person name="Binkley G."/>
            <person name="Balakrishnan R."/>
            <person name="Costanzo M.C."/>
            <person name="Dwight S.S."/>
            <person name="Hitz B.C."/>
            <person name="Karra K."/>
            <person name="Nash R.S."/>
            <person name="Weng S."/>
            <person name="Wong E.D."/>
            <person name="Lloyd P."/>
            <person name="Skrzypek M.S."/>
            <person name="Miyasato S.R."/>
            <person name="Simison M."/>
            <person name="Cherry J.M."/>
        </authorList>
    </citation>
    <scope>GENOME REANNOTATION</scope>
    <source>
        <strain>ATCC 204508 / S288c</strain>
    </source>
</reference>
<reference key="4">
    <citation type="journal article" date="1999" name="EMBO J.">
        <title>Sum1 and Hst1 repress middle sporulation-specific gene expression during mitosis in Saccharomyces cerevisiae.</title>
        <authorList>
            <person name="Xie J."/>
            <person name="Pierce M."/>
            <person name="Gailus-Durner V."/>
            <person name="Wagner M."/>
            <person name="Winter E."/>
            <person name="Vershon A.K."/>
        </authorList>
    </citation>
    <scope>FUNCTION</scope>
    <scope>DNA-BINDING</scope>
</reference>
<reference key="5">
    <citation type="journal article" date="2003" name="Mol. Cell. Biol.">
        <title>Rfm1, a novel tethering factor required to recruit the hst1 histone deacetylase for repression of middle sporulation genes.</title>
        <authorList>
            <person name="McCord R."/>
            <person name="Pierce M."/>
            <person name="Xie J."/>
            <person name="Wonkatal S."/>
            <person name="Mickel C."/>
            <person name="Vershon A.K."/>
        </authorList>
    </citation>
    <scope>INTERACTION WITH RFM1</scope>
</reference>
<reference key="6">
    <citation type="journal article" date="2003" name="Nature">
        <title>Global analysis of protein expression in yeast.</title>
        <authorList>
            <person name="Ghaemmaghami S."/>
            <person name="Huh W.-K."/>
            <person name="Bower K."/>
            <person name="Howson R.W."/>
            <person name="Belle A."/>
            <person name="Dephoure N."/>
            <person name="O'Shea E.K."/>
            <person name="Weissman J.S."/>
        </authorList>
    </citation>
    <scope>LEVEL OF PROTEIN EXPRESSION [LARGE SCALE ANALYSIS]</scope>
</reference>
<reference key="7">
    <citation type="journal article" date="2007" name="J. Proteome Res.">
        <title>Large-scale phosphorylation analysis of alpha-factor-arrested Saccharomyces cerevisiae.</title>
        <authorList>
            <person name="Li X."/>
            <person name="Gerber S.A."/>
            <person name="Rudner A.D."/>
            <person name="Beausoleil S.A."/>
            <person name="Haas W."/>
            <person name="Villen J."/>
            <person name="Elias J.E."/>
            <person name="Gygi S.P."/>
        </authorList>
    </citation>
    <scope>PHOSPHORYLATION [LARGE SCALE ANALYSIS] AT THR-697</scope>
    <scope>IDENTIFICATION BY MASS SPECTROMETRY [LARGE SCALE ANALYSIS]</scope>
    <source>
        <strain>ADR376</strain>
    </source>
</reference>
<reference key="8">
    <citation type="journal article" date="2008" name="Mol. Cell. Proteomics">
        <title>A multidimensional chromatography technology for in-depth phosphoproteome analysis.</title>
        <authorList>
            <person name="Albuquerque C.P."/>
            <person name="Smolka M.B."/>
            <person name="Payne S.H."/>
            <person name="Bafna V."/>
            <person name="Eng J."/>
            <person name="Zhou H."/>
        </authorList>
    </citation>
    <scope>PHOSPHORYLATION [LARGE SCALE ANALYSIS] AT SER-628; SER-681; THR-697; SER-738 AND THR-817</scope>
    <scope>IDENTIFICATION BY MASS SPECTROMETRY [LARGE SCALE ANALYSIS]</scope>
</reference>
<reference key="9">
    <citation type="journal article" date="2009" name="Science">
        <title>Global analysis of Cdk1 substrate phosphorylation sites provides insights into evolution.</title>
        <authorList>
            <person name="Holt L.J."/>
            <person name="Tuch B.B."/>
            <person name="Villen J."/>
            <person name="Johnson A.D."/>
            <person name="Gygi S.P."/>
            <person name="Morgan D.O."/>
        </authorList>
    </citation>
    <scope>PHOSPHORYLATION [LARGE SCALE ANALYSIS] AT SER-378; SER-379; SER-628; THR-697; SER-712; SER-738 AND THR-817</scope>
    <scope>IDENTIFICATION BY MASS SPECTROMETRY [LARGE SCALE ANALYSIS]</scope>
</reference>
<reference key="10">
    <citation type="journal article" date="2012" name="Proc. Natl. Acad. Sci. U.S.A.">
        <title>N-terminal acetylome analyses and functional insights of the N-terminal acetyltransferase NatB.</title>
        <authorList>
            <person name="Van Damme P."/>
            <person name="Lasa M."/>
            <person name="Polevoda B."/>
            <person name="Gazquez C."/>
            <person name="Elosegui-Artola A."/>
            <person name="Kim D.S."/>
            <person name="De Juan-Pardo E."/>
            <person name="Demeyer K."/>
            <person name="Hole K."/>
            <person name="Larrea E."/>
            <person name="Timmerman E."/>
            <person name="Prieto J."/>
            <person name="Arnesen T."/>
            <person name="Sherman F."/>
            <person name="Gevaert K."/>
            <person name="Aldabe R."/>
        </authorList>
    </citation>
    <scope>ACETYLATION [LARGE SCALE ANALYSIS] AT SER-2</scope>
    <scope>CLEAVAGE OF INITIATOR METHIONINE [LARGE SCALE ANALYSIS]</scope>
    <scope>IDENTIFICATION BY MASS SPECTROMETRY [LARGE SCALE ANALYSIS]</scope>
</reference>
<organism>
    <name type="scientific">Saccharomyces cerevisiae (strain ATCC 204508 / S288c)</name>
    <name type="common">Baker's yeast</name>
    <dbReference type="NCBI Taxonomy" id="559292"/>
    <lineage>
        <taxon>Eukaryota</taxon>
        <taxon>Fungi</taxon>
        <taxon>Dikarya</taxon>
        <taxon>Ascomycota</taxon>
        <taxon>Saccharomycotina</taxon>
        <taxon>Saccharomycetes</taxon>
        <taxon>Saccharomycetales</taxon>
        <taxon>Saccharomycetaceae</taxon>
        <taxon>Saccharomyces</taxon>
    </lineage>
</organism>
<comment type="function">
    <text evidence="2">DNA-binding protein that specifically binds the regulatory region of middle sporulation genes (MSE). Required for the repression of middle sporulation genes during vegetative growth. Represses expression via the recruitment of histone deacetylase HST1.</text>
</comment>
<comment type="subunit">
    <text evidence="3">Interacts with RFM1. This interaction is required to recruit HST1.</text>
</comment>
<comment type="interaction">
    <interactant intactId="EBI-18547">
        <id>P46676</id>
    </interactant>
    <interactant intactId="EBI-8394">
        <id>P38074</id>
        <label>HMT1</label>
    </interactant>
    <organismsDiffer>false</organismsDiffer>
    <experiments>2</experiments>
</comment>
<comment type="interaction">
    <interactant intactId="EBI-18547">
        <id>P46676</id>
    </interactant>
    <interactant intactId="EBI-8691">
        <id>P53685</id>
        <label>HST1</label>
    </interactant>
    <organismsDiffer>false</organismsDiffer>
    <experiments>2</experiments>
</comment>
<comment type="interaction">
    <interactant intactId="EBI-18547">
        <id>P46676</id>
    </interactant>
    <interactant intactId="EBI-15023">
        <id>Q12192</id>
        <label>RFM1</label>
    </interactant>
    <organismsDiffer>false</organismsDiffer>
    <experiments>2</experiments>
</comment>
<comment type="subcellular location">
    <subcellularLocation>
        <location evidence="5">Nucleus</location>
    </subcellularLocation>
</comment>
<comment type="miscellaneous">
    <text evidence="4">Present with 149 molecules/cell in log phase SD medium.</text>
</comment>